<keyword id="KW-0997">Cell inner membrane</keyword>
<keyword id="KW-1003">Cell membrane</keyword>
<keyword id="KW-0342">GTP-binding</keyword>
<keyword id="KW-0378">Hydrolase</keyword>
<keyword id="KW-0472">Membrane</keyword>
<keyword id="KW-0547">Nucleotide-binding</keyword>
<keyword id="KW-0648">Protein biosynthesis</keyword>
<organism>
    <name type="scientific">Bacteroides fragilis (strain ATCC 25285 / DSM 2151 / CCUG 4856 / JCM 11019 / LMG 10263 / NCTC 9343 / Onslow / VPI 2553 / EN-2)</name>
    <dbReference type="NCBI Taxonomy" id="272559"/>
    <lineage>
        <taxon>Bacteria</taxon>
        <taxon>Pseudomonadati</taxon>
        <taxon>Bacteroidota</taxon>
        <taxon>Bacteroidia</taxon>
        <taxon>Bacteroidales</taxon>
        <taxon>Bacteroidaceae</taxon>
        <taxon>Bacteroides</taxon>
    </lineage>
</organism>
<feature type="chain" id="PRO_0000224744" description="Elongation factor 4">
    <location>
        <begin position="1"/>
        <end position="593"/>
    </location>
</feature>
<feature type="domain" description="tr-type G">
    <location>
        <begin position="2"/>
        <end position="181"/>
    </location>
</feature>
<feature type="binding site" evidence="1">
    <location>
        <begin position="14"/>
        <end position="19"/>
    </location>
    <ligand>
        <name>GTP</name>
        <dbReference type="ChEBI" id="CHEBI:37565"/>
    </ligand>
</feature>
<feature type="binding site" evidence="1">
    <location>
        <begin position="128"/>
        <end position="131"/>
    </location>
    <ligand>
        <name>GTP</name>
        <dbReference type="ChEBI" id="CHEBI:37565"/>
    </ligand>
</feature>
<accession>Q5LC85</accession>
<dbReference type="EC" id="3.6.5.n1" evidence="1"/>
<dbReference type="EMBL" id="CR626927">
    <property type="protein sequence ID" value="CAH08281.1"/>
    <property type="molecule type" value="Genomic_DNA"/>
</dbReference>
<dbReference type="RefSeq" id="WP_005788089.1">
    <property type="nucleotide sequence ID" value="NZ_UFTH01000001.1"/>
</dbReference>
<dbReference type="SMR" id="Q5LC85"/>
<dbReference type="PaxDb" id="272559-BF9343_2500"/>
<dbReference type="GeneID" id="60369046"/>
<dbReference type="KEGG" id="bfs:BF9343_2500"/>
<dbReference type="eggNOG" id="COG0481">
    <property type="taxonomic scope" value="Bacteria"/>
</dbReference>
<dbReference type="HOGENOM" id="CLU_009995_3_3_10"/>
<dbReference type="Proteomes" id="UP000006731">
    <property type="component" value="Chromosome"/>
</dbReference>
<dbReference type="GO" id="GO:0005886">
    <property type="term" value="C:plasma membrane"/>
    <property type="evidence" value="ECO:0007669"/>
    <property type="project" value="UniProtKB-SubCell"/>
</dbReference>
<dbReference type="GO" id="GO:0005525">
    <property type="term" value="F:GTP binding"/>
    <property type="evidence" value="ECO:0007669"/>
    <property type="project" value="UniProtKB-UniRule"/>
</dbReference>
<dbReference type="GO" id="GO:0003924">
    <property type="term" value="F:GTPase activity"/>
    <property type="evidence" value="ECO:0007669"/>
    <property type="project" value="UniProtKB-UniRule"/>
</dbReference>
<dbReference type="GO" id="GO:0043022">
    <property type="term" value="F:ribosome binding"/>
    <property type="evidence" value="ECO:0007669"/>
    <property type="project" value="UniProtKB-UniRule"/>
</dbReference>
<dbReference type="GO" id="GO:0003746">
    <property type="term" value="F:translation elongation factor activity"/>
    <property type="evidence" value="ECO:0007669"/>
    <property type="project" value="UniProtKB-UniRule"/>
</dbReference>
<dbReference type="GO" id="GO:0045727">
    <property type="term" value="P:positive regulation of translation"/>
    <property type="evidence" value="ECO:0007669"/>
    <property type="project" value="UniProtKB-UniRule"/>
</dbReference>
<dbReference type="CDD" id="cd03699">
    <property type="entry name" value="EF4_II"/>
    <property type="match status" value="1"/>
</dbReference>
<dbReference type="CDD" id="cd16260">
    <property type="entry name" value="EF4_III"/>
    <property type="match status" value="1"/>
</dbReference>
<dbReference type="CDD" id="cd01890">
    <property type="entry name" value="LepA"/>
    <property type="match status" value="1"/>
</dbReference>
<dbReference type="CDD" id="cd03709">
    <property type="entry name" value="lepA_C"/>
    <property type="match status" value="1"/>
</dbReference>
<dbReference type="FunFam" id="3.40.50.300:FF:000078">
    <property type="entry name" value="Elongation factor 4"/>
    <property type="match status" value="1"/>
</dbReference>
<dbReference type="FunFam" id="2.40.30.10:FF:000015">
    <property type="entry name" value="Translation factor GUF1, mitochondrial"/>
    <property type="match status" value="1"/>
</dbReference>
<dbReference type="FunFam" id="3.30.70.240:FF:000007">
    <property type="entry name" value="Translation factor GUF1, mitochondrial"/>
    <property type="match status" value="1"/>
</dbReference>
<dbReference type="FunFam" id="3.30.70.2570:FF:000001">
    <property type="entry name" value="Translation factor GUF1, mitochondrial"/>
    <property type="match status" value="1"/>
</dbReference>
<dbReference type="FunFam" id="3.30.70.870:FF:000004">
    <property type="entry name" value="Translation factor GUF1, mitochondrial"/>
    <property type="match status" value="1"/>
</dbReference>
<dbReference type="Gene3D" id="3.30.70.240">
    <property type="match status" value="1"/>
</dbReference>
<dbReference type="Gene3D" id="3.30.70.2570">
    <property type="entry name" value="Elongation factor 4, C-terminal domain"/>
    <property type="match status" value="1"/>
</dbReference>
<dbReference type="Gene3D" id="3.30.70.870">
    <property type="entry name" value="Elongation Factor G (Translational Gtpase), domain 3"/>
    <property type="match status" value="1"/>
</dbReference>
<dbReference type="Gene3D" id="3.40.50.300">
    <property type="entry name" value="P-loop containing nucleotide triphosphate hydrolases"/>
    <property type="match status" value="1"/>
</dbReference>
<dbReference type="Gene3D" id="2.40.30.10">
    <property type="entry name" value="Translation factors"/>
    <property type="match status" value="1"/>
</dbReference>
<dbReference type="HAMAP" id="MF_00071">
    <property type="entry name" value="LepA"/>
    <property type="match status" value="1"/>
</dbReference>
<dbReference type="InterPro" id="IPR006297">
    <property type="entry name" value="EF-4"/>
</dbReference>
<dbReference type="InterPro" id="IPR035647">
    <property type="entry name" value="EFG_III/V"/>
</dbReference>
<dbReference type="InterPro" id="IPR000640">
    <property type="entry name" value="EFG_V-like"/>
</dbReference>
<dbReference type="InterPro" id="IPR004161">
    <property type="entry name" value="EFTu-like_2"/>
</dbReference>
<dbReference type="InterPro" id="IPR038363">
    <property type="entry name" value="LepA_C_sf"/>
</dbReference>
<dbReference type="InterPro" id="IPR013842">
    <property type="entry name" value="LepA_CTD"/>
</dbReference>
<dbReference type="InterPro" id="IPR035654">
    <property type="entry name" value="LepA_IV"/>
</dbReference>
<dbReference type="InterPro" id="IPR027417">
    <property type="entry name" value="P-loop_NTPase"/>
</dbReference>
<dbReference type="InterPro" id="IPR005225">
    <property type="entry name" value="Small_GTP-bd"/>
</dbReference>
<dbReference type="InterPro" id="IPR000795">
    <property type="entry name" value="T_Tr_GTP-bd_dom"/>
</dbReference>
<dbReference type="NCBIfam" id="TIGR01393">
    <property type="entry name" value="lepA"/>
    <property type="match status" value="1"/>
</dbReference>
<dbReference type="NCBIfam" id="TIGR00231">
    <property type="entry name" value="small_GTP"/>
    <property type="match status" value="1"/>
</dbReference>
<dbReference type="PANTHER" id="PTHR43512:SF4">
    <property type="entry name" value="TRANSLATION FACTOR GUF1 HOMOLOG, CHLOROPLASTIC"/>
    <property type="match status" value="1"/>
</dbReference>
<dbReference type="PANTHER" id="PTHR43512">
    <property type="entry name" value="TRANSLATION FACTOR GUF1-RELATED"/>
    <property type="match status" value="1"/>
</dbReference>
<dbReference type="Pfam" id="PF00679">
    <property type="entry name" value="EFG_C"/>
    <property type="match status" value="1"/>
</dbReference>
<dbReference type="Pfam" id="PF00009">
    <property type="entry name" value="GTP_EFTU"/>
    <property type="match status" value="1"/>
</dbReference>
<dbReference type="Pfam" id="PF03144">
    <property type="entry name" value="GTP_EFTU_D2"/>
    <property type="match status" value="1"/>
</dbReference>
<dbReference type="Pfam" id="PF06421">
    <property type="entry name" value="LepA_C"/>
    <property type="match status" value="1"/>
</dbReference>
<dbReference type="PRINTS" id="PR00315">
    <property type="entry name" value="ELONGATNFCT"/>
</dbReference>
<dbReference type="SUPFAM" id="SSF54980">
    <property type="entry name" value="EF-G C-terminal domain-like"/>
    <property type="match status" value="2"/>
</dbReference>
<dbReference type="SUPFAM" id="SSF52540">
    <property type="entry name" value="P-loop containing nucleoside triphosphate hydrolases"/>
    <property type="match status" value="1"/>
</dbReference>
<dbReference type="PROSITE" id="PS51722">
    <property type="entry name" value="G_TR_2"/>
    <property type="match status" value="1"/>
</dbReference>
<sequence>MDKIRNFCIIAHIDHGKSTLADRLLEFTNTIQVTEGQMLDDMDLEKERGITIKSHAIQMEYTYKGEKYILNLIDTPGHVDFSYEVSRSIAACEGALLIVDASQGVQAQTISNLYMAIEHDLEIIPIINKCDMASAMPEEVEDEIVELLGCKRDEIIRASGKTGMGVEEILAAVIERIPHPQGDESAPLQALIFDSVFNSFRGIIAYFKITNGVIRAGDKVKFFNTGKEYVADEIGVLKMEMVPRKELRTGDVGYIISGIKTSKEVKVGDTITHVARPCDKAIAGFEEVKPMVFAGVYPIEAEEFEDLRASLEKLQLNDASLTFQPESSLALGFGFRCGFLGLLHMEIVQERLDREFDMNVITTVPNVSYHIYDKQGNMTEVHNPGGMPDPTMIDHIEEPYIKASIITTTDYIGPIMTLCLGKRGELLKQEYISGNRVELFYNMPLGEIVIDFYDRLKSISKGYASFDYHPDGFRPSKLVKLDILLNGESVDALSTLTHFDNAYDMGRRMCEKLKELIPRQQFEIAIQAAIGAKIIARETIKAVRKDVTAKCYGGDISRKRKLLEKQKKGKKRMKQIGNVEVPQKAFLAVLKLD</sequence>
<name>LEPA_BACFN</name>
<protein>
    <recommendedName>
        <fullName evidence="1">Elongation factor 4</fullName>
        <shortName evidence="1">EF-4</shortName>
        <ecNumber evidence="1">3.6.5.n1</ecNumber>
    </recommendedName>
    <alternativeName>
        <fullName evidence="1">Ribosomal back-translocase LepA</fullName>
    </alternativeName>
</protein>
<reference key="1">
    <citation type="journal article" date="2005" name="Science">
        <title>Extensive DNA inversions in the B. fragilis genome control variable gene expression.</title>
        <authorList>
            <person name="Cerdeno-Tarraga A.-M."/>
            <person name="Patrick S."/>
            <person name="Crossman L.C."/>
            <person name="Blakely G."/>
            <person name="Abratt V."/>
            <person name="Lennard N."/>
            <person name="Poxton I."/>
            <person name="Duerden B."/>
            <person name="Harris B."/>
            <person name="Quail M.A."/>
            <person name="Barron A."/>
            <person name="Clark L."/>
            <person name="Corton C."/>
            <person name="Doggett J."/>
            <person name="Holden M.T.G."/>
            <person name="Larke N."/>
            <person name="Line A."/>
            <person name="Lord A."/>
            <person name="Norbertczak H."/>
            <person name="Ormond D."/>
            <person name="Price C."/>
            <person name="Rabbinowitsch E."/>
            <person name="Woodward J."/>
            <person name="Barrell B.G."/>
            <person name="Parkhill J."/>
        </authorList>
    </citation>
    <scope>NUCLEOTIDE SEQUENCE [LARGE SCALE GENOMIC DNA]</scope>
    <source>
        <strain>ATCC 25285 / DSM 2151 / CCUG 4856 / JCM 11019 / LMG 10263 / NCTC 9343 / Onslow / VPI 2553 / EN-2</strain>
    </source>
</reference>
<comment type="function">
    <text evidence="1">Required for accurate and efficient protein synthesis under certain stress conditions. May act as a fidelity factor of the translation reaction, by catalyzing a one-codon backward translocation of tRNAs on improperly translocated ribosomes. Back-translocation proceeds from a post-translocation (POST) complex to a pre-translocation (PRE) complex, thus giving elongation factor G a second chance to translocate the tRNAs correctly. Binds to ribosomes in a GTP-dependent manner.</text>
</comment>
<comment type="catalytic activity">
    <reaction evidence="1">
        <text>GTP + H2O = GDP + phosphate + H(+)</text>
        <dbReference type="Rhea" id="RHEA:19669"/>
        <dbReference type="ChEBI" id="CHEBI:15377"/>
        <dbReference type="ChEBI" id="CHEBI:15378"/>
        <dbReference type="ChEBI" id="CHEBI:37565"/>
        <dbReference type="ChEBI" id="CHEBI:43474"/>
        <dbReference type="ChEBI" id="CHEBI:58189"/>
        <dbReference type="EC" id="3.6.5.n1"/>
    </reaction>
</comment>
<comment type="subcellular location">
    <subcellularLocation>
        <location evidence="1">Cell inner membrane</location>
        <topology evidence="1">Peripheral membrane protein</topology>
        <orientation evidence="1">Cytoplasmic side</orientation>
    </subcellularLocation>
</comment>
<comment type="similarity">
    <text evidence="1">Belongs to the TRAFAC class translation factor GTPase superfamily. Classic translation factor GTPase family. LepA subfamily.</text>
</comment>
<proteinExistence type="inferred from homology"/>
<evidence type="ECO:0000255" key="1">
    <source>
        <dbReference type="HAMAP-Rule" id="MF_00071"/>
    </source>
</evidence>
<gene>
    <name evidence="1" type="primary">lepA</name>
    <name type="ordered locus">BF2581</name>
</gene>